<accession>Q8TXI5</accession>
<protein>
    <recommendedName>
        <fullName evidence="1">DNA-directed RNA polymerase subunit Rpo5</fullName>
        <ecNumber evidence="1">2.7.7.6</ecNumber>
    </recommendedName>
    <alternativeName>
        <fullName evidence="1">DNA-directed RNA polymerase subunit H</fullName>
    </alternativeName>
</protein>
<keyword id="KW-0963">Cytoplasm</keyword>
<keyword id="KW-0240">DNA-directed RNA polymerase</keyword>
<keyword id="KW-0548">Nucleotidyltransferase</keyword>
<keyword id="KW-1185">Reference proteome</keyword>
<keyword id="KW-0804">Transcription</keyword>
<keyword id="KW-0808">Transferase</keyword>
<organism>
    <name type="scientific">Methanopyrus kandleri (strain AV19 / DSM 6324 / JCM 9639 / NBRC 100938)</name>
    <dbReference type="NCBI Taxonomy" id="190192"/>
    <lineage>
        <taxon>Archaea</taxon>
        <taxon>Methanobacteriati</taxon>
        <taxon>Methanobacteriota</taxon>
        <taxon>Methanomada group</taxon>
        <taxon>Methanopyri</taxon>
        <taxon>Methanopyrales</taxon>
        <taxon>Methanopyraceae</taxon>
        <taxon>Methanopyrus</taxon>
    </lineage>
</organism>
<comment type="function">
    <text evidence="1">DNA-dependent RNA polymerase (RNAP) catalyzes the transcription of DNA into RNA using the four ribonucleoside triphosphates as substrates.</text>
</comment>
<comment type="catalytic activity">
    <reaction evidence="1">
        <text>RNA(n) + a ribonucleoside 5'-triphosphate = RNA(n+1) + diphosphate</text>
        <dbReference type="Rhea" id="RHEA:21248"/>
        <dbReference type="Rhea" id="RHEA-COMP:14527"/>
        <dbReference type="Rhea" id="RHEA-COMP:17342"/>
        <dbReference type="ChEBI" id="CHEBI:33019"/>
        <dbReference type="ChEBI" id="CHEBI:61557"/>
        <dbReference type="ChEBI" id="CHEBI:140395"/>
        <dbReference type="EC" id="2.7.7.6"/>
    </reaction>
</comment>
<comment type="subunit">
    <text evidence="1">Part of the RNA polymerase complex.</text>
</comment>
<comment type="subcellular location">
    <subcellularLocation>
        <location evidence="1">Cytoplasm</location>
    </subcellularLocation>
</comment>
<comment type="similarity">
    <text evidence="1">Belongs to the archaeal Rpo5/eukaryotic RPB5 RNA polymerase subunit family.</text>
</comment>
<proteinExistence type="inferred from homology"/>
<sequence length="92" mass="10282">MAERLDPDVVLNHVLVPKHEVIDDEEEIEKILEELGVEKDDLPRIHTNDPVVVALSEKLGKRIKPGSLVKIVRDSPTAGKTVVYRVVTNPPE</sequence>
<gene>
    <name evidence="1" type="primary">rpo5</name>
    <name evidence="2" type="synonym">rpb5</name>
    <name evidence="1" type="synonym">rpoH</name>
    <name type="ordered locus">MK0688</name>
</gene>
<feature type="chain" id="PRO_0000146093" description="DNA-directed RNA polymerase subunit Rpo5">
    <location>
        <begin position="1"/>
        <end position="92"/>
    </location>
</feature>
<reference key="1">
    <citation type="journal article" date="2002" name="Proc. Natl. Acad. Sci. U.S.A.">
        <title>The complete genome of hyperthermophile Methanopyrus kandleri AV19 and monophyly of archaeal methanogens.</title>
        <authorList>
            <person name="Slesarev A.I."/>
            <person name="Mezhevaya K.V."/>
            <person name="Makarova K.S."/>
            <person name="Polushin N.N."/>
            <person name="Shcherbinina O.V."/>
            <person name="Shakhova V.V."/>
            <person name="Belova G.I."/>
            <person name="Aravind L."/>
            <person name="Natale D.A."/>
            <person name="Rogozin I.B."/>
            <person name="Tatusov R.L."/>
            <person name="Wolf Y.I."/>
            <person name="Stetter K.O."/>
            <person name="Malykh A.G."/>
            <person name="Koonin E.V."/>
            <person name="Kozyavkin S.A."/>
        </authorList>
    </citation>
    <scope>NUCLEOTIDE SEQUENCE [LARGE SCALE GENOMIC DNA]</scope>
    <source>
        <strain>AV19 / DSM 6324 / JCM 9639 / NBRC 100938</strain>
    </source>
</reference>
<name>RPO5_METKA</name>
<evidence type="ECO:0000255" key="1">
    <source>
        <dbReference type="HAMAP-Rule" id="MF_00025"/>
    </source>
</evidence>
<evidence type="ECO:0000303" key="2">
    <source>
    </source>
</evidence>
<dbReference type="EC" id="2.7.7.6" evidence="1"/>
<dbReference type="EMBL" id="AE009439">
    <property type="protein sequence ID" value="AAM01903.1"/>
    <property type="molecule type" value="Genomic_DNA"/>
</dbReference>
<dbReference type="RefSeq" id="WP_011019058.1">
    <property type="nucleotide sequence ID" value="NC_003551.1"/>
</dbReference>
<dbReference type="SMR" id="Q8TXI5"/>
<dbReference type="FunCoup" id="Q8TXI5">
    <property type="interactions" value="2"/>
</dbReference>
<dbReference type="STRING" id="190192.MK0688"/>
<dbReference type="PaxDb" id="190192-MK0688"/>
<dbReference type="EnsemblBacteria" id="AAM01903">
    <property type="protein sequence ID" value="AAM01903"/>
    <property type="gene ID" value="MK0688"/>
</dbReference>
<dbReference type="GeneID" id="68225862"/>
<dbReference type="KEGG" id="mka:MK0688"/>
<dbReference type="PATRIC" id="fig|190192.8.peg.727"/>
<dbReference type="HOGENOM" id="CLU_058320_4_0_2"/>
<dbReference type="InParanoid" id="Q8TXI5"/>
<dbReference type="Proteomes" id="UP000001826">
    <property type="component" value="Chromosome"/>
</dbReference>
<dbReference type="GO" id="GO:0005737">
    <property type="term" value="C:cytoplasm"/>
    <property type="evidence" value="ECO:0007669"/>
    <property type="project" value="UniProtKB-SubCell"/>
</dbReference>
<dbReference type="GO" id="GO:0000428">
    <property type="term" value="C:DNA-directed RNA polymerase complex"/>
    <property type="evidence" value="ECO:0007669"/>
    <property type="project" value="UniProtKB-KW"/>
</dbReference>
<dbReference type="GO" id="GO:0003677">
    <property type="term" value="F:DNA binding"/>
    <property type="evidence" value="ECO:0007669"/>
    <property type="project" value="InterPro"/>
</dbReference>
<dbReference type="GO" id="GO:0003899">
    <property type="term" value="F:DNA-directed RNA polymerase activity"/>
    <property type="evidence" value="ECO:0007669"/>
    <property type="project" value="UniProtKB-UniRule"/>
</dbReference>
<dbReference type="GO" id="GO:0006351">
    <property type="term" value="P:DNA-templated transcription"/>
    <property type="evidence" value="ECO:0007669"/>
    <property type="project" value="UniProtKB-UniRule"/>
</dbReference>
<dbReference type="Gene3D" id="3.90.940.20">
    <property type="entry name" value="RPB5-like RNA polymerase subunit"/>
    <property type="match status" value="1"/>
</dbReference>
<dbReference type="HAMAP" id="MF_00025">
    <property type="entry name" value="RNApol_Rpo5_RPB5"/>
    <property type="match status" value="1"/>
</dbReference>
<dbReference type="InterPro" id="IPR014381">
    <property type="entry name" value="Arch_Rpo5/euc_Rpb5"/>
</dbReference>
<dbReference type="InterPro" id="IPR000783">
    <property type="entry name" value="RNA_pol_subH/Rpb5_C"/>
</dbReference>
<dbReference type="InterPro" id="IPR020608">
    <property type="entry name" value="RNA_pol_subH/Rpb5_CS"/>
</dbReference>
<dbReference type="InterPro" id="IPR035913">
    <property type="entry name" value="RPB5-like_sf"/>
</dbReference>
<dbReference type="NCBIfam" id="NF007129">
    <property type="entry name" value="PRK09570.1"/>
    <property type="match status" value="1"/>
</dbReference>
<dbReference type="Pfam" id="PF01191">
    <property type="entry name" value="RNA_pol_Rpb5_C"/>
    <property type="match status" value="1"/>
</dbReference>
<dbReference type="SUPFAM" id="SSF55287">
    <property type="entry name" value="RPB5-like RNA polymerase subunit"/>
    <property type="match status" value="1"/>
</dbReference>
<dbReference type="PROSITE" id="PS01110">
    <property type="entry name" value="RNA_POL_H_23KD"/>
    <property type="match status" value="1"/>
</dbReference>